<sequence>MSINPLASKIASPYARALYDFSVEQNIMHQVTADFQNLDVFLAEVPTLMEYLGNPIVTATQKEALLTKTLKSQLNAETFKFLMVLVKRDRINLLPTIITTYLELVYKTASVKMIEVSTAFPFTTLQKLNLIKKLKELTNAREIRLVVTVDSSLIGGFLIKTNSKVIDFTIKNQLENLAKHLDGVLEI</sequence>
<protein>
    <recommendedName>
        <fullName evidence="1">ATP synthase subunit delta, chloroplastic</fullName>
    </recommendedName>
    <alternativeName>
        <fullName evidence="1">ATP synthase F(1) sector subunit delta</fullName>
    </alternativeName>
    <alternativeName>
        <fullName evidence="1">F-type ATPase subunit delta</fullName>
    </alternativeName>
</protein>
<feature type="chain" id="PRO_0000371216" description="ATP synthase subunit delta, chloroplastic">
    <location>
        <begin position="1"/>
        <end position="187"/>
    </location>
</feature>
<geneLocation type="chloroplast"/>
<proteinExistence type="inferred from homology"/>
<dbReference type="EMBL" id="EF067921">
    <property type="protein sequence ID" value="ABK20728.1"/>
    <property type="molecule type" value="Genomic_DNA"/>
</dbReference>
<dbReference type="RefSeq" id="YP_874505.1">
    <property type="nucleotide sequence ID" value="NC_008589.1"/>
</dbReference>
<dbReference type="SMR" id="A0T0P3"/>
<dbReference type="STRING" id="35128.A0T0P3"/>
<dbReference type="PaxDb" id="35128-Thapsdraft1023"/>
<dbReference type="GeneID" id="4524800"/>
<dbReference type="eggNOG" id="KOG1662">
    <property type="taxonomic scope" value="Eukaryota"/>
</dbReference>
<dbReference type="InParanoid" id="A0T0P3"/>
<dbReference type="OMA" id="SKMIDMS"/>
<dbReference type="GO" id="GO:0009535">
    <property type="term" value="C:chloroplast thylakoid membrane"/>
    <property type="evidence" value="ECO:0007669"/>
    <property type="project" value="UniProtKB-SubCell"/>
</dbReference>
<dbReference type="GO" id="GO:0045259">
    <property type="term" value="C:proton-transporting ATP synthase complex"/>
    <property type="evidence" value="ECO:0007669"/>
    <property type="project" value="UniProtKB-KW"/>
</dbReference>
<dbReference type="GO" id="GO:0046933">
    <property type="term" value="F:proton-transporting ATP synthase activity, rotational mechanism"/>
    <property type="evidence" value="ECO:0007669"/>
    <property type="project" value="UniProtKB-UniRule"/>
</dbReference>
<dbReference type="GO" id="GO:0015986">
    <property type="term" value="P:proton motive force-driven ATP synthesis"/>
    <property type="evidence" value="ECO:0000318"/>
    <property type="project" value="GO_Central"/>
</dbReference>
<dbReference type="Gene3D" id="1.10.520.20">
    <property type="entry name" value="N-terminal domain of the delta subunit of the F1F0-ATP synthase"/>
    <property type="match status" value="1"/>
</dbReference>
<dbReference type="HAMAP" id="MF_01416">
    <property type="entry name" value="ATP_synth_delta_bact"/>
    <property type="match status" value="1"/>
</dbReference>
<dbReference type="InterPro" id="IPR026015">
    <property type="entry name" value="ATP_synth_OSCP/delta_N_sf"/>
</dbReference>
<dbReference type="InterPro" id="IPR020781">
    <property type="entry name" value="ATPase_OSCP/d_CS"/>
</dbReference>
<dbReference type="InterPro" id="IPR000711">
    <property type="entry name" value="ATPase_OSCP/dsu"/>
</dbReference>
<dbReference type="NCBIfam" id="TIGR01145">
    <property type="entry name" value="ATP_synt_delta"/>
    <property type="match status" value="1"/>
</dbReference>
<dbReference type="PANTHER" id="PTHR11910">
    <property type="entry name" value="ATP SYNTHASE DELTA CHAIN"/>
    <property type="match status" value="1"/>
</dbReference>
<dbReference type="Pfam" id="PF00213">
    <property type="entry name" value="OSCP"/>
    <property type="match status" value="1"/>
</dbReference>
<dbReference type="PRINTS" id="PR00125">
    <property type="entry name" value="ATPASEDELTA"/>
</dbReference>
<dbReference type="SUPFAM" id="SSF47928">
    <property type="entry name" value="N-terminal domain of the delta subunit of the F1F0-ATP synthase"/>
    <property type="match status" value="1"/>
</dbReference>
<dbReference type="PROSITE" id="PS00389">
    <property type="entry name" value="ATPASE_DELTA"/>
    <property type="match status" value="1"/>
</dbReference>
<gene>
    <name evidence="1" type="primary">atpD</name>
</gene>
<reference key="1">
    <citation type="journal article" date="2007" name="Mol. Genet. Genomics">
        <title>Chloroplast genomes of the diatoms Phaeodactylum tricornutum and Thalassiosira pseudonana: comparison with other plastid genomes of the red lineage.</title>
        <authorList>
            <person name="Oudot-Le Secq M.-P."/>
            <person name="Grimwood J."/>
            <person name="Shapiro H."/>
            <person name="Armbrust E.V."/>
            <person name="Bowler C."/>
            <person name="Green B.R."/>
        </authorList>
    </citation>
    <scope>NUCLEOTIDE SEQUENCE [LARGE SCALE GENOMIC DNA]</scope>
    <source>
        <strain>CCMP1335 / NEPCC58 / CCAP 1085/12</strain>
    </source>
</reference>
<organism>
    <name type="scientific">Thalassiosira pseudonana</name>
    <name type="common">Marine diatom</name>
    <name type="synonym">Cyclotella nana</name>
    <dbReference type="NCBI Taxonomy" id="35128"/>
    <lineage>
        <taxon>Eukaryota</taxon>
        <taxon>Sar</taxon>
        <taxon>Stramenopiles</taxon>
        <taxon>Ochrophyta</taxon>
        <taxon>Bacillariophyta</taxon>
        <taxon>Coscinodiscophyceae</taxon>
        <taxon>Thalassiosirophycidae</taxon>
        <taxon>Thalassiosirales</taxon>
        <taxon>Thalassiosiraceae</taxon>
        <taxon>Thalassiosira</taxon>
    </lineage>
</organism>
<name>ATPD_THAPS</name>
<keyword id="KW-0066">ATP synthesis</keyword>
<keyword id="KW-0139">CF(1)</keyword>
<keyword id="KW-0150">Chloroplast</keyword>
<keyword id="KW-0375">Hydrogen ion transport</keyword>
<keyword id="KW-0406">Ion transport</keyword>
<keyword id="KW-0472">Membrane</keyword>
<keyword id="KW-0934">Plastid</keyword>
<keyword id="KW-0793">Thylakoid</keyword>
<keyword id="KW-0813">Transport</keyword>
<accession>A0T0P3</accession>
<evidence type="ECO:0000255" key="1">
    <source>
        <dbReference type="HAMAP-Rule" id="MF_01416"/>
    </source>
</evidence>
<comment type="function">
    <text evidence="1">F(1)F(0) ATP synthase produces ATP from ADP in the presence of a proton or sodium gradient. F-type ATPases consist of two structural domains, F(1) containing the extramembraneous catalytic core and F(0) containing the membrane proton channel, linked together by a central stalk and a peripheral stalk. During catalysis, ATP synthesis in the catalytic domain of F(1) is coupled via a rotary mechanism of the central stalk subunits to proton translocation.</text>
</comment>
<comment type="function">
    <text evidence="1">This protein is part of the stalk that links CF(0) to CF(1). It either transmits conformational changes from CF(0) to CF(1) or is implicated in proton conduction.</text>
</comment>
<comment type="subunit">
    <text evidence="1">F-type ATPases have 2 components, F(1) - the catalytic core - and F(0) - the membrane proton channel. F(1) has five subunits: alpha(3), beta(3), gamma(1), delta(1), epsilon(1). CF(0) has four main subunits: a(1), b(1), b'(1) and c(10-14). The alpha and beta chains form an alternating ring which encloses part of the gamma chain. F(1) is attached to F(0) by a central stalk formed by the gamma and epsilon chains, while a peripheral stalk is formed by the delta, b and b' chains.</text>
</comment>
<comment type="subcellular location">
    <subcellularLocation>
        <location evidence="1">Plastid</location>
        <location evidence="1">Chloroplast thylakoid membrane</location>
        <topology evidence="1">Peripheral membrane protein</topology>
    </subcellularLocation>
</comment>
<comment type="similarity">
    <text evidence="1">Belongs to the ATPase delta chain family.</text>
</comment>